<proteinExistence type="inferred from homology"/>
<comment type="function">
    <text evidence="1">The SecYEG-SecDF-YajC-YidC holo-translocon (HTL) protein secretase/insertase is a supercomplex required for protein secretion, insertion of proteins into membranes, and assembly of membrane protein complexes. While the SecYEG complex is essential for assembly of a number of proteins and complexes, the SecDF-YajC-YidC subcomplex facilitates these functions.</text>
</comment>
<comment type="subunit">
    <text evidence="1">Part of the SecDF-YidC-YajC translocase complex. The SecDF-YidC-YajC translocase forms a supercomplex with SecYEG, called the holo-translocon (HTL).</text>
</comment>
<comment type="subcellular location">
    <subcellularLocation>
        <location evidence="1">Cell inner membrane</location>
        <topology evidence="1">Single-pass membrane protein</topology>
    </subcellularLocation>
</comment>
<comment type="similarity">
    <text evidence="3">Belongs to the YajC family.</text>
</comment>
<dbReference type="EMBL" id="AE000511">
    <property type="protein sequence ID" value="AAD08591.1"/>
    <property type="molecule type" value="Genomic_DNA"/>
</dbReference>
<dbReference type="PIR" id="G64713">
    <property type="entry name" value="G64713"/>
</dbReference>
<dbReference type="RefSeq" id="NP_208342.1">
    <property type="nucleotide sequence ID" value="NC_000915.1"/>
</dbReference>
<dbReference type="RefSeq" id="WP_000529779.1">
    <property type="nucleotide sequence ID" value="NC_018939.1"/>
</dbReference>
<dbReference type="SMR" id="O26075"/>
<dbReference type="FunCoup" id="O26075">
    <property type="interactions" value="153"/>
</dbReference>
<dbReference type="STRING" id="85962.HP_1551"/>
<dbReference type="PaxDb" id="85962-C694_08035"/>
<dbReference type="EnsemblBacteria" id="AAD08591">
    <property type="protein sequence ID" value="AAD08591"/>
    <property type="gene ID" value="HP_1551"/>
</dbReference>
<dbReference type="KEGG" id="heo:C694_08035"/>
<dbReference type="KEGG" id="hpy:HP_1551"/>
<dbReference type="PATRIC" id="fig|85962.47.peg.1666"/>
<dbReference type="eggNOG" id="COG1862">
    <property type="taxonomic scope" value="Bacteria"/>
</dbReference>
<dbReference type="InParanoid" id="O26075"/>
<dbReference type="OrthoDB" id="9811406at2"/>
<dbReference type="Proteomes" id="UP000000429">
    <property type="component" value="Chromosome"/>
</dbReference>
<dbReference type="GO" id="GO:0005886">
    <property type="term" value="C:plasma membrane"/>
    <property type="evidence" value="ECO:0000318"/>
    <property type="project" value="GO_Central"/>
</dbReference>
<dbReference type="GO" id="GO:0015031">
    <property type="term" value="P:protein transport"/>
    <property type="evidence" value="ECO:0007669"/>
    <property type="project" value="UniProtKB-KW"/>
</dbReference>
<dbReference type="InterPro" id="IPR003849">
    <property type="entry name" value="Preprotein_translocase_YajC"/>
</dbReference>
<dbReference type="NCBIfam" id="TIGR00739">
    <property type="entry name" value="yajC"/>
    <property type="match status" value="1"/>
</dbReference>
<dbReference type="PANTHER" id="PTHR33909">
    <property type="entry name" value="SEC TRANSLOCON ACCESSORY COMPLEX SUBUNIT YAJC"/>
    <property type="match status" value="1"/>
</dbReference>
<dbReference type="PANTHER" id="PTHR33909:SF1">
    <property type="entry name" value="SEC TRANSLOCON ACCESSORY COMPLEX SUBUNIT YAJC"/>
    <property type="match status" value="1"/>
</dbReference>
<dbReference type="Pfam" id="PF02699">
    <property type="entry name" value="YajC"/>
    <property type="match status" value="1"/>
</dbReference>
<dbReference type="PRINTS" id="PR01853">
    <property type="entry name" value="YAJCTRNLCASE"/>
</dbReference>
<dbReference type="SMART" id="SM01323">
    <property type="entry name" value="YajC"/>
    <property type="match status" value="1"/>
</dbReference>
<sequence>MGQIKDILTTLLPLVVLFLIFYFLIVRPQRQQQKKHKEMIESLTKGDKIVTQGGLIVEVLKAEANFFSVKLNDDTTAKLSKNYVAFKLDELDQFGLAEPIVIQQGREEISAKLSGAKTLKQRQITTE</sequence>
<gene>
    <name type="primary">yajC</name>
    <name type="ordered locus">HP_1551</name>
</gene>
<accession>O26075</accession>
<name>YAJC_HELPY</name>
<keyword id="KW-0997">Cell inner membrane</keyword>
<keyword id="KW-1003">Cell membrane</keyword>
<keyword id="KW-0472">Membrane</keyword>
<keyword id="KW-0653">Protein transport</keyword>
<keyword id="KW-1185">Reference proteome</keyword>
<keyword id="KW-0811">Translocation</keyword>
<keyword id="KW-0812">Transmembrane</keyword>
<keyword id="KW-1133">Transmembrane helix</keyword>
<keyword id="KW-0813">Transport</keyword>
<feature type="chain" id="PRO_0000097032" description="Sec translocon accessory complex subunit YajC">
    <location>
        <begin position="1"/>
        <end position="127"/>
    </location>
</feature>
<feature type="transmembrane region" description="Helical" evidence="2">
    <location>
        <begin position="6"/>
        <end position="26"/>
    </location>
</feature>
<protein>
    <recommendedName>
        <fullName>Sec translocon accessory complex subunit YajC</fullName>
    </recommendedName>
</protein>
<reference key="1">
    <citation type="journal article" date="1997" name="Nature">
        <title>The complete genome sequence of the gastric pathogen Helicobacter pylori.</title>
        <authorList>
            <person name="Tomb J.-F."/>
            <person name="White O."/>
            <person name="Kerlavage A.R."/>
            <person name="Clayton R.A."/>
            <person name="Sutton G.G."/>
            <person name="Fleischmann R.D."/>
            <person name="Ketchum K.A."/>
            <person name="Klenk H.-P."/>
            <person name="Gill S.R."/>
            <person name="Dougherty B.A."/>
            <person name="Nelson K.E."/>
            <person name="Quackenbush J."/>
            <person name="Zhou L."/>
            <person name="Kirkness E.F."/>
            <person name="Peterson S.N."/>
            <person name="Loftus B.J."/>
            <person name="Richardson D.L."/>
            <person name="Dodson R.J."/>
            <person name="Khalak H.G."/>
            <person name="Glodek A."/>
            <person name="McKenney K."/>
            <person name="FitzGerald L.M."/>
            <person name="Lee N."/>
            <person name="Adams M.D."/>
            <person name="Hickey E.K."/>
            <person name="Berg D.E."/>
            <person name="Gocayne J.D."/>
            <person name="Utterback T.R."/>
            <person name="Peterson J.D."/>
            <person name="Kelley J.M."/>
            <person name="Cotton M.D."/>
            <person name="Weidman J.F."/>
            <person name="Fujii C."/>
            <person name="Bowman C."/>
            <person name="Watthey L."/>
            <person name="Wallin E."/>
            <person name="Hayes W.S."/>
            <person name="Borodovsky M."/>
            <person name="Karp P.D."/>
            <person name="Smith H.O."/>
            <person name="Fraser C.M."/>
            <person name="Venter J.C."/>
        </authorList>
    </citation>
    <scope>NUCLEOTIDE SEQUENCE [LARGE SCALE GENOMIC DNA]</scope>
    <source>
        <strain>ATCC 700392 / 26695</strain>
    </source>
</reference>
<organism>
    <name type="scientific">Helicobacter pylori (strain ATCC 700392 / 26695)</name>
    <name type="common">Campylobacter pylori</name>
    <dbReference type="NCBI Taxonomy" id="85962"/>
    <lineage>
        <taxon>Bacteria</taxon>
        <taxon>Pseudomonadati</taxon>
        <taxon>Campylobacterota</taxon>
        <taxon>Epsilonproteobacteria</taxon>
        <taxon>Campylobacterales</taxon>
        <taxon>Helicobacteraceae</taxon>
        <taxon>Helicobacter</taxon>
    </lineage>
</organism>
<evidence type="ECO:0000250" key="1">
    <source>
        <dbReference type="UniProtKB" id="P0ADZ7"/>
    </source>
</evidence>
<evidence type="ECO:0000255" key="2"/>
<evidence type="ECO:0000305" key="3"/>